<reference evidence="6" key="1">
    <citation type="journal article" date="2009" name="PLoS Biol.">
        <title>Lineage-specific biology revealed by a finished genome assembly of the mouse.</title>
        <authorList>
            <person name="Church D.M."/>
            <person name="Goodstadt L."/>
            <person name="Hillier L.W."/>
            <person name="Zody M.C."/>
            <person name="Goldstein S."/>
            <person name="She X."/>
            <person name="Bult C.J."/>
            <person name="Agarwala R."/>
            <person name="Cherry J.L."/>
            <person name="DiCuccio M."/>
            <person name="Hlavina W."/>
            <person name="Kapustin Y."/>
            <person name="Meric P."/>
            <person name="Maglott D."/>
            <person name="Birtle Z."/>
            <person name="Marques A.C."/>
            <person name="Graves T."/>
            <person name="Zhou S."/>
            <person name="Teague B."/>
            <person name="Potamousis K."/>
            <person name="Churas C."/>
            <person name="Place M."/>
            <person name="Herschleb J."/>
            <person name="Runnheim R."/>
            <person name="Forrest D."/>
            <person name="Amos-Landgraf J."/>
            <person name="Schwartz D.C."/>
            <person name="Cheng Z."/>
            <person name="Lindblad-Toh K."/>
            <person name="Eichler E.E."/>
            <person name="Ponting C.P."/>
        </authorList>
    </citation>
    <scope>NUCLEOTIDE SEQUENCE [LARGE SCALE GENOMIC DNA]</scope>
    <source>
        <strain evidence="6">C57BL/6J</strain>
    </source>
</reference>
<reference key="2">
    <citation type="journal article" date="2021" name="EMBO Rep.">
        <title>CUL2LRR1, TRAIP and p97 control CMG helicase disassembly in the mammalian cell cycle.</title>
        <authorList>
            <person name="Villa F."/>
            <person name="Fujisawa R."/>
            <person name="Ainsworth J."/>
            <person name="Nishimura K."/>
            <person name="Lie-A-Ling M."/>
            <person name="Lacaud G."/>
            <person name="Labib K.P."/>
        </authorList>
    </citation>
    <scope>FUNCTION</scope>
    <scope>SUBUNIT</scope>
    <scope>SUBCELLULAR LOCATION</scope>
</reference>
<organism evidence="6">
    <name type="scientific">Mus musculus</name>
    <name type="common">Mouse</name>
    <dbReference type="NCBI Taxonomy" id="10090"/>
    <lineage>
        <taxon>Eukaryota</taxon>
        <taxon>Metazoa</taxon>
        <taxon>Chordata</taxon>
        <taxon>Craniata</taxon>
        <taxon>Vertebrata</taxon>
        <taxon>Euteleostomi</taxon>
        <taxon>Mammalia</taxon>
        <taxon>Eutheria</taxon>
        <taxon>Euarchontoglires</taxon>
        <taxon>Glires</taxon>
        <taxon>Rodentia</taxon>
        <taxon>Myomorpha</taxon>
        <taxon>Muroidea</taxon>
        <taxon>Muridae</taxon>
        <taxon>Murinae</taxon>
        <taxon>Mus</taxon>
        <taxon>Mus</taxon>
    </lineage>
</organism>
<gene>
    <name evidence="5" type="primary">Lrr1</name>
</gene>
<name>LLR1_MOUSE</name>
<dbReference type="CCDS" id="CCDS36462.1"/>
<dbReference type="RefSeq" id="NP_001074875.1">
    <property type="nucleotide sequence ID" value="NM_001081406.2"/>
</dbReference>
<dbReference type="SMR" id="D3YY91"/>
<dbReference type="FunCoup" id="D3YY91">
    <property type="interactions" value="565"/>
</dbReference>
<dbReference type="IntAct" id="D3YY91">
    <property type="interactions" value="17"/>
</dbReference>
<dbReference type="STRING" id="10090.ENSMUSP00000106251"/>
<dbReference type="iPTMnet" id="D3YY91"/>
<dbReference type="PhosphoSitePlus" id="D3YY91"/>
<dbReference type="PaxDb" id="10090-ENSMUSP00000106251"/>
<dbReference type="PeptideAtlas" id="D3YY91"/>
<dbReference type="ProteomicsDB" id="310617"/>
<dbReference type="Antibodypedia" id="23515">
    <property type="antibodies" value="106 antibodies from 18 providers"/>
</dbReference>
<dbReference type="DNASU" id="69706"/>
<dbReference type="Ensembl" id="ENSMUST00000110621.3">
    <property type="protein sequence ID" value="ENSMUSP00000106251.2"/>
    <property type="gene ID" value="ENSMUSG00000034883.10"/>
</dbReference>
<dbReference type="GeneID" id="69706"/>
<dbReference type="KEGG" id="mmu:69706"/>
<dbReference type="UCSC" id="uc007nrq.1">
    <property type="organism name" value="mouse"/>
</dbReference>
<dbReference type="AGR" id="MGI:1916956"/>
<dbReference type="CTD" id="122769"/>
<dbReference type="MGI" id="MGI:1916956">
    <property type="gene designation" value="Lrr1"/>
</dbReference>
<dbReference type="VEuPathDB" id="HostDB:ENSMUSG00000034883"/>
<dbReference type="eggNOG" id="KOG0619">
    <property type="taxonomic scope" value="Eukaryota"/>
</dbReference>
<dbReference type="GeneTree" id="ENSGT00940000158830"/>
<dbReference type="HOGENOM" id="CLU_053349_1_0_1"/>
<dbReference type="InParanoid" id="D3YY91"/>
<dbReference type="OMA" id="GELNDWC"/>
<dbReference type="OrthoDB" id="17912at2759"/>
<dbReference type="PhylomeDB" id="D3YY91"/>
<dbReference type="TreeFam" id="TF319257"/>
<dbReference type="Reactome" id="R-MMU-8951664">
    <property type="pathway name" value="Neddylation"/>
</dbReference>
<dbReference type="Reactome" id="R-MMU-983168">
    <property type="pathway name" value="Antigen processing: Ubiquitination &amp; Proteasome degradation"/>
</dbReference>
<dbReference type="UniPathway" id="UPA00143"/>
<dbReference type="BioGRID-ORCS" id="69706">
    <property type="hits" value="25 hits in 78 CRISPR screens"/>
</dbReference>
<dbReference type="PRO" id="PR:D3YY91"/>
<dbReference type="Proteomes" id="UP000000589">
    <property type="component" value="Chromosome 12"/>
</dbReference>
<dbReference type="RNAct" id="D3YY91">
    <property type="molecule type" value="protein"/>
</dbReference>
<dbReference type="Bgee" id="ENSMUSG00000034883">
    <property type="expression patterns" value="Expressed in animal zygote and 153 other cell types or tissues"/>
</dbReference>
<dbReference type="ExpressionAtlas" id="D3YY91">
    <property type="expression patterns" value="baseline and differential"/>
</dbReference>
<dbReference type="GO" id="GO:0005634">
    <property type="term" value="C:nucleus"/>
    <property type="evidence" value="ECO:0007669"/>
    <property type="project" value="UniProtKB-SubCell"/>
</dbReference>
<dbReference type="GO" id="GO:0016567">
    <property type="term" value="P:protein ubiquitination"/>
    <property type="evidence" value="ECO:0007669"/>
    <property type="project" value="UniProtKB-UniPathway"/>
</dbReference>
<dbReference type="FunFam" id="3.80.10.10:FF:001222">
    <property type="entry name" value="Leucine rich repeat protein 1"/>
    <property type="match status" value="1"/>
</dbReference>
<dbReference type="FunFam" id="3.80.10.10:FF:001792">
    <property type="entry name" value="Leucine-rich repeat protein 1"/>
    <property type="match status" value="1"/>
</dbReference>
<dbReference type="Gene3D" id="3.80.10.10">
    <property type="entry name" value="Ribonuclease Inhibitor"/>
    <property type="match status" value="2"/>
</dbReference>
<dbReference type="InterPro" id="IPR001611">
    <property type="entry name" value="Leu-rich_rpt"/>
</dbReference>
<dbReference type="InterPro" id="IPR025875">
    <property type="entry name" value="Leu-rich_rpt_4"/>
</dbReference>
<dbReference type="InterPro" id="IPR003591">
    <property type="entry name" value="Leu-rich_rpt_typical-subtyp"/>
</dbReference>
<dbReference type="InterPro" id="IPR032675">
    <property type="entry name" value="LRR_dom_sf"/>
</dbReference>
<dbReference type="InterPro" id="IPR050216">
    <property type="entry name" value="LRR_domain-containing"/>
</dbReference>
<dbReference type="PANTHER" id="PTHR48051">
    <property type="match status" value="1"/>
</dbReference>
<dbReference type="PANTHER" id="PTHR48051:SF52">
    <property type="entry name" value="LEUCINE-RICH REPEAT PROTEIN 1"/>
    <property type="match status" value="1"/>
</dbReference>
<dbReference type="Pfam" id="PF12799">
    <property type="entry name" value="LRR_4"/>
    <property type="match status" value="1"/>
</dbReference>
<dbReference type="Pfam" id="PF25344">
    <property type="entry name" value="PH_LRR1"/>
    <property type="match status" value="1"/>
</dbReference>
<dbReference type="SMART" id="SM00364">
    <property type="entry name" value="LRR_BAC"/>
    <property type="match status" value="4"/>
</dbReference>
<dbReference type="SMART" id="SM00369">
    <property type="entry name" value="LRR_TYP"/>
    <property type="match status" value="5"/>
</dbReference>
<dbReference type="SUPFAM" id="SSF52058">
    <property type="entry name" value="L domain-like"/>
    <property type="match status" value="1"/>
</dbReference>
<dbReference type="PROSITE" id="PS51450">
    <property type="entry name" value="LRR"/>
    <property type="match status" value="6"/>
</dbReference>
<protein>
    <recommendedName>
        <fullName>Leucine-rich repeat protein 1</fullName>
    </recommendedName>
</protein>
<keyword id="KW-0433">Leucine-rich repeat</keyword>
<keyword id="KW-0539">Nucleus</keyword>
<keyword id="KW-1185">Reference proteome</keyword>
<keyword id="KW-0677">Repeat</keyword>
<keyword id="KW-0833">Ubl conjugation pathway</keyword>
<comment type="function">
    <text evidence="1 3">Substrate recognition subunit of an ECS (Elongin BC-CUL2/5-SOCS-box protein) E3 ubiquitin-protein ligase complex which mediates the ubiquitination and subsequent proteasomal degradation of target proteins (PubMed:33590678). ECS(LRR1) ubiquitinates MCM7 and promotes CMG replisome disassembly by VCP and chromatin extraction during S-phase (PubMed:33590678). May negatively regulate the 4-1BB-mediated signaling cascades which result in the activation of NK-kappaB and JNK1 (By similarity).</text>
</comment>
<comment type="pathway">
    <text evidence="3">Protein modification; protein ubiquitination.</text>
</comment>
<comment type="subunit">
    <text evidence="3">Component of the probable ECS(LRR1) E3 ubiquitin-protein ligase complex which contains CUL2, RBX1, Elongin BC complex and LRR1. Interacts with CUL2, RBX1, ELOB and ELOC.</text>
</comment>
<comment type="subcellular location">
    <subcellularLocation>
        <location evidence="4">Nucleus</location>
    </subcellularLocation>
</comment>
<proteinExistence type="evidence at protein level"/>
<accession>D3YY91</accession>
<feature type="chain" id="PRO_0000456676" description="Leucine-rich repeat protein 1">
    <location>
        <begin position="1"/>
        <end position="422"/>
    </location>
</feature>
<feature type="repeat" description="LRR 1" evidence="2">
    <location>
        <begin position="184"/>
        <end position="207"/>
    </location>
</feature>
<feature type="repeat" description="LRR 2" evidence="2">
    <location>
        <begin position="209"/>
        <end position="230"/>
    </location>
</feature>
<feature type="repeat" description="LRR 3" evidence="2">
    <location>
        <begin position="233"/>
        <end position="258"/>
    </location>
</feature>
<feature type="repeat" description="LRR 4" evidence="2">
    <location>
        <begin position="260"/>
        <end position="279"/>
    </location>
</feature>
<feature type="repeat" description="LRR 5" evidence="2">
    <location>
        <begin position="280"/>
        <end position="301"/>
    </location>
</feature>
<feature type="repeat" description="LRR 6" evidence="2">
    <location>
        <begin position="304"/>
        <end position="327"/>
    </location>
</feature>
<evidence type="ECO:0000250" key="1">
    <source>
        <dbReference type="UniProtKB" id="Q96L50"/>
    </source>
</evidence>
<evidence type="ECO:0000255" key="2"/>
<evidence type="ECO:0000269" key="3">
    <source>
    </source>
</evidence>
<evidence type="ECO:0000305" key="4">
    <source>
    </source>
</evidence>
<evidence type="ECO:0000312" key="5">
    <source>
        <dbReference type="MGI" id="MGI:1916956"/>
    </source>
</evidence>
<evidence type="ECO:0000312" key="6">
    <source>
        <dbReference type="Proteomes" id="UP000000589"/>
    </source>
</evidence>
<sequence>MRLPCEVEVRSCHLPTLGLKSRGKGVRAVVSLCQAPGRNELQPEARAEPGGHACLLVSTMKDRQGTSYKLRENIEQLFTKFVDEGKATVRLKEPPVDICLSKANPGNLKTLLSAMRLAHRGCDVNTPLSTLKPVKTSEFEKYKTKMVITSKKDYPLSKNFPYFLEHLQASYCSLARVDMRMLCLKNLTKLDLSHNCIKKLPATIGDLTHLQELNLNDNQLETFSVPLCTSTLQKSLHSLDLSKNKIKALPVQFCQFRELTNLNLNDNELIHLPFKIGQLTNLRFLSAARNKLRNLPSEFKMLSLEYLDLFGNTFEKPEVIPIIKLQVPLTLLESCEQAVLFYRIPYGPDIIPYHLCQDLDTAKTCVCGRFCLQSFIQGTTTMNLHSVAHTVVLVDSMGRTEAPVVSYFCSLTCFVKSSDMLN</sequence>